<gene>
    <name evidence="2" type="primary">ro60</name>
    <name evidence="2" type="synonym">trove2</name>
</gene>
<evidence type="ECO:0000250" key="1">
    <source>
        <dbReference type="UniProtKB" id="O08848"/>
    </source>
</evidence>
<evidence type="ECO:0000250" key="2">
    <source>
        <dbReference type="UniProtKB" id="P10155"/>
    </source>
</evidence>
<evidence type="ECO:0000255" key="3">
    <source>
        <dbReference type="PROSITE-ProRule" id="PRU00343"/>
    </source>
</evidence>
<evidence type="ECO:0000269" key="4">
    <source>
    </source>
</evidence>
<evidence type="ECO:0000269" key="5">
    <source>
    </source>
</evidence>
<evidence type="ECO:0000305" key="6"/>
<evidence type="ECO:0007829" key="7">
    <source>
        <dbReference type="PDB" id="1YVP"/>
    </source>
</evidence>
<evidence type="ECO:0007829" key="8">
    <source>
        <dbReference type="PDB" id="1YVR"/>
    </source>
</evidence>
<evidence type="ECO:0007829" key="9">
    <source>
        <dbReference type="PDB" id="2I91"/>
    </source>
</evidence>
<feature type="chain" id="PRO_0000174171" description="RNA-binding protein RO60">
    <location>
        <begin position="1"/>
        <end position="538"/>
    </location>
</feature>
<feature type="domain" description="TROVE" evidence="3">
    <location>
        <begin position="16"/>
        <end position="369"/>
    </location>
</feature>
<feature type="region of interest" description="RNA-binding" evidence="4 5">
    <location>
        <begin position="120"/>
        <end position="284"/>
    </location>
</feature>
<feature type="region of interest" description="VWFA-like domain" evidence="6">
    <location>
        <begin position="361"/>
        <end position="538"/>
    </location>
</feature>
<feature type="binding site" evidence="4 5">
    <location>
        <position position="378"/>
    </location>
    <ligand>
        <name>a divalent metal cation</name>
        <dbReference type="ChEBI" id="CHEBI:60240"/>
    </ligand>
</feature>
<feature type="binding site" evidence="4 5">
    <location>
        <position position="380"/>
    </location>
    <ligand>
        <name>a divalent metal cation</name>
        <dbReference type="ChEBI" id="CHEBI:60240"/>
    </ligand>
</feature>
<feature type="binding site" evidence="4 5">
    <location>
        <position position="445"/>
    </location>
    <ligand>
        <name>a divalent metal cation</name>
        <dbReference type="ChEBI" id="CHEBI:60240"/>
    </ligand>
</feature>
<feature type="strand" evidence="9">
    <location>
        <begin position="19"/>
        <end position="21"/>
    </location>
</feature>
<feature type="strand" evidence="8">
    <location>
        <begin position="23"/>
        <end position="26"/>
    </location>
</feature>
<feature type="helix" evidence="8">
    <location>
        <begin position="29"/>
        <end position="39"/>
    </location>
</feature>
<feature type="strand" evidence="8">
    <location>
        <begin position="46"/>
        <end position="48"/>
    </location>
</feature>
<feature type="helix" evidence="8">
    <location>
        <begin position="50"/>
        <end position="66"/>
    </location>
</feature>
<feature type="turn" evidence="9">
    <location>
        <begin position="67"/>
        <end position="69"/>
    </location>
</feature>
<feature type="helix" evidence="8">
    <location>
        <begin position="70"/>
        <end position="83"/>
    </location>
</feature>
<feature type="helix" evidence="8">
    <location>
        <begin position="90"/>
        <end position="100"/>
    </location>
</feature>
<feature type="strand" evidence="7">
    <location>
        <begin position="101"/>
        <end position="103"/>
    </location>
</feature>
<feature type="helix" evidence="8">
    <location>
        <begin position="105"/>
        <end position="118"/>
    </location>
</feature>
<feature type="helix" evidence="8">
    <location>
        <begin position="122"/>
        <end position="134"/>
    </location>
</feature>
<feature type="helix" evidence="8">
    <location>
        <begin position="146"/>
        <end position="157"/>
    </location>
</feature>
<feature type="helix" evidence="8">
    <location>
        <begin position="161"/>
        <end position="168"/>
    </location>
</feature>
<feature type="strand" evidence="8">
    <location>
        <begin position="174"/>
        <end position="176"/>
    </location>
</feature>
<feature type="helix" evidence="8">
    <location>
        <begin position="179"/>
        <end position="185"/>
    </location>
</feature>
<feature type="helix" evidence="8">
    <location>
        <begin position="193"/>
        <end position="203"/>
    </location>
</feature>
<feature type="helix" evidence="8">
    <location>
        <begin position="206"/>
        <end position="212"/>
    </location>
</feature>
<feature type="turn" evidence="8">
    <location>
        <begin position="213"/>
        <end position="215"/>
    </location>
</feature>
<feature type="helix" evidence="8">
    <location>
        <begin position="220"/>
        <end position="236"/>
    </location>
</feature>
<feature type="helix" evidence="8">
    <location>
        <begin position="241"/>
        <end position="251"/>
    </location>
</feature>
<feature type="helix" evidence="8">
    <location>
        <begin position="255"/>
        <end position="257"/>
    </location>
</feature>
<feature type="helix" evidence="8">
    <location>
        <begin position="262"/>
        <end position="264"/>
    </location>
</feature>
<feature type="helix" evidence="8">
    <location>
        <begin position="266"/>
        <end position="274"/>
    </location>
</feature>
<feature type="helix" evidence="8">
    <location>
        <begin position="278"/>
        <end position="290"/>
    </location>
</feature>
<feature type="turn" evidence="8">
    <location>
        <begin position="291"/>
        <end position="294"/>
    </location>
</feature>
<feature type="helix" evidence="8">
    <location>
        <begin position="299"/>
        <end position="308"/>
    </location>
</feature>
<feature type="helix" evidence="8">
    <location>
        <begin position="311"/>
        <end position="316"/>
    </location>
</feature>
<feature type="helix" evidence="8">
    <location>
        <begin position="321"/>
        <end position="333"/>
    </location>
</feature>
<feature type="helix" evidence="8">
    <location>
        <begin position="347"/>
        <end position="359"/>
    </location>
</feature>
<feature type="strand" evidence="8">
    <location>
        <begin position="371"/>
        <end position="376"/>
    </location>
</feature>
<feature type="helix" evidence="8">
    <location>
        <begin position="379"/>
        <end position="382"/>
    </location>
</feature>
<feature type="strand" evidence="8">
    <location>
        <begin position="383"/>
        <end position="385"/>
    </location>
</feature>
<feature type="helix" evidence="8">
    <location>
        <begin position="392"/>
        <end position="406"/>
    </location>
</feature>
<feature type="strand" evidence="8">
    <location>
        <begin position="408"/>
        <end position="420"/>
    </location>
</feature>
<feature type="helix" evidence="8">
    <location>
        <begin position="430"/>
        <end position="437"/>
    </location>
</feature>
<feature type="helix" evidence="8">
    <location>
        <begin position="449"/>
        <end position="456"/>
    </location>
</feature>
<feature type="strand" evidence="8">
    <location>
        <begin position="462"/>
        <end position="468"/>
    </location>
</feature>
<feature type="strand" evidence="8">
    <location>
        <begin position="474"/>
        <end position="476"/>
    </location>
</feature>
<feature type="helix" evidence="8">
    <location>
        <begin position="479"/>
        <end position="490"/>
    </location>
</feature>
<feature type="strand" evidence="8">
    <location>
        <begin position="495"/>
        <end position="500"/>
    </location>
</feature>
<feature type="strand" evidence="8">
    <location>
        <begin position="502"/>
        <end position="509"/>
    </location>
</feature>
<feature type="strand" evidence="8">
    <location>
        <begin position="516"/>
        <end position="520"/>
    </location>
</feature>
<feature type="helix" evidence="8">
    <location>
        <begin position="526"/>
        <end position="534"/>
    </location>
</feature>
<name>RO60_XENLA</name>
<proteinExistence type="evidence at protein level"/>
<sequence>MEATMDQTQPLNEKQVPNSEGCYVWQVSDMNRLRRFLCFGSEGGTYYIEEKKLGQENAEALLRLIEDGKGCEVVQEIKTFSQEGRAAKQEPTLFALAVCSQCSDIKTKQAAFRAVPEVCRIPTHLFTFIQFKKDLKEGMKCGMWGRALRKAVSDWYNTKDALNLAMAVTKYKQRNGWSHKDLLRLSHIKPANEGLTMVAKYVSKGWKEVQEAYKEKELSPETEKVLKYLEATERVKRTKDELEIIHLIDEYRLVREHLLTIHLKSKEIWKSLLQDMPLTALLRNLGKMTADSVLAPASSEVSSVCERLTNEKLLKKARIHPFHILVALETYKKGHGNRGKLRWIPDTSIVEALDNAFYKSFKLVEPTGKRFLLAIDVSASMNQRVLGSILNASVVAAAMCMLVARTEKDSHMVAFSDEMLPCPITVNMLLHEVVEKMSDITMGSTDCALPMLWAQKTNTAADIFIVFTDCETNVEDVHPATALKQYREKMGIPAKLIVCAMTSNGFSIADPDDRGMLDICGFDSGALDVIRNFTLDLI</sequence>
<organism>
    <name type="scientific">Xenopus laevis</name>
    <name type="common">African clawed frog</name>
    <dbReference type="NCBI Taxonomy" id="8355"/>
    <lineage>
        <taxon>Eukaryota</taxon>
        <taxon>Metazoa</taxon>
        <taxon>Chordata</taxon>
        <taxon>Craniata</taxon>
        <taxon>Vertebrata</taxon>
        <taxon>Euteleostomi</taxon>
        <taxon>Amphibia</taxon>
        <taxon>Batrachia</taxon>
        <taxon>Anura</taxon>
        <taxon>Pipoidea</taxon>
        <taxon>Pipidae</taxon>
        <taxon>Xenopodinae</taxon>
        <taxon>Xenopus</taxon>
        <taxon>Xenopus</taxon>
    </lineage>
</organism>
<protein>
    <recommendedName>
        <fullName evidence="2">RNA-binding protein RO60</fullName>
    </recommendedName>
    <alternativeName>
        <fullName evidence="6">60 kDa SS-A/Ro ribonucleoprotein</fullName>
        <shortName>60 kDa Ro protein</shortName>
        <shortName>60 kDa ribonucleoprotein Ro</shortName>
        <shortName>RoRNP</shortName>
    </alternativeName>
    <alternativeName>
        <fullName evidence="2">TROVE domain family member 2</fullName>
    </alternativeName>
</protein>
<accession>P42700</accession>
<dbReference type="EMBL" id="L15430">
    <property type="protein sequence ID" value="AAC38001.1"/>
    <property type="molecule type" value="mRNA"/>
</dbReference>
<dbReference type="PIR" id="I51560">
    <property type="entry name" value="I51560"/>
</dbReference>
<dbReference type="RefSeq" id="NP_001079344.1">
    <property type="nucleotide sequence ID" value="NM_001085875.2"/>
</dbReference>
<dbReference type="PDB" id="1YVP">
    <property type="method" value="X-ray"/>
    <property type="resolution" value="2.20 A"/>
    <property type="chains" value="A/B=1-538"/>
</dbReference>
<dbReference type="PDB" id="1YVR">
    <property type="method" value="X-ray"/>
    <property type="resolution" value="1.95 A"/>
    <property type="chains" value="A=1-538"/>
</dbReference>
<dbReference type="PDB" id="2I91">
    <property type="method" value="X-ray"/>
    <property type="resolution" value="2.65 A"/>
    <property type="chains" value="A/B=1-538"/>
</dbReference>
<dbReference type="PDBsum" id="1YVP"/>
<dbReference type="PDBsum" id="1YVR"/>
<dbReference type="PDBsum" id="2I91"/>
<dbReference type="SMR" id="P42700"/>
<dbReference type="GeneID" id="378688"/>
<dbReference type="KEGG" id="xla:378688"/>
<dbReference type="AGR" id="Xenbase:XB-GENE-968761"/>
<dbReference type="CTD" id="378688"/>
<dbReference type="Xenbase" id="XB-GENE-968761">
    <property type="gene designation" value="ro60.L"/>
</dbReference>
<dbReference type="OrthoDB" id="6098064at2759"/>
<dbReference type="EvolutionaryTrace" id="P42700"/>
<dbReference type="Proteomes" id="UP000186698">
    <property type="component" value="Chromosome 4L"/>
</dbReference>
<dbReference type="Bgee" id="378688">
    <property type="expression patterns" value="Expressed in pancreas and 19 other cell types or tissues"/>
</dbReference>
<dbReference type="GO" id="GO:0005737">
    <property type="term" value="C:cytoplasm"/>
    <property type="evidence" value="ECO:0007669"/>
    <property type="project" value="UniProtKB-SubCell"/>
</dbReference>
<dbReference type="GO" id="GO:1990904">
    <property type="term" value="C:ribonucleoprotein complex"/>
    <property type="evidence" value="ECO:0000318"/>
    <property type="project" value="GO_Central"/>
</dbReference>
<dbReference type="GO" id="GO:0046872">
    <property type="term" value="F:metal ion binding"/>
    <property type="evidence" value="ECO:0007669"/>
    <property type="project" value="UniProtKB-KW"/>
</dbReference>
<dbReference type="GO" id="GO:0034336">
    <property type="term" value="F:misfolded RNA binding"/>
    <property type="evidence" value="ECO:0000314"/>
    <property type="project" value="MGI"/>
</dbReference>
<dbReference type="GO" id="GO:0003723">
    <property type="term" value="F:RNA binding"/>
    <property type="evidence" value="ECO:0000318"/>
    <property type="project" value="GO_Central"/>
</dbReference>
<dbReference type="GO" id="GO:0030030">
    <property type="term" value="P:cell projection organization"/>
    <property type="evidence" value="ECO:0007669"/>
    <property type="project" value="UniProtKB-KW"/>
</dbReference>
<dbReference type="FunFam" id="3.40.50.410:FF:000033">
    <property type="entry name" value="60 kDa SS-A/Ro ribonucleoprotein"/>
    <property type="match status" value="1"/>
</dbReference>
<dbReference type="FunFam" id="3.40.50.410:FF:000040">
    <property type="entry name" value="60 kDa SS-A/Ro ribonucleoprotein isoform X1"/>
    <property type="match status" value="1"/>
</dbReference>
<dbReference type="Gene3D" id="3.40.50.410">
    <property type="entry name" value="von Willebrand factor, type A domain"/>
    <property type="match status" value="2"/>
</dbReference>
<dbReference type="InterPro" id="IPR040322">
    <property type="entry name" value="TROVE2"/>
</dbReference>
<dbReference type="InterPro" id="IPR008858">
    <property type="entry name" value="TROVE_dom"/>
</dbReference>
<dbReference type="InterPro" id="IPR037214">
    <property type="entry name" value="TROVE_dom_sf"/>
</dbReference>
<dbReference type="InterPro" id="IPR056800">
    <property type="entry name" value="vWA_Ro60"/>
</dbReference>
<dbReference type="InterPro" id="IPR036465">
    <property type="entry name" value="vWFA_dom_sf"/>
</dbReference>
<dbReference type="PANTHER" id="PTHR14202">
    <property type="entry name" value="60 KDA RIBONUCLEOPROTEIN SSA/RO"/>
    <property type="match status" value="1"/>
</dbReference>
<dbReference type="PANTHER" id="PTHR14202:SF0">
    <property type="entry name" value="RNA-BINDING PROTEIN RO60"/>
    <property type="match status" value="1"/>
</dbReference>
<dbReference type="Pfam" id="PF05731">
    <property type="entry name" value="TROVE"/>
    <property type="match status" value="1"/>
</dbReference>
<dbReference type="Pfam" id="PF25045">
    <property type="entry name" value="vWA_Ro60"/>
    <property type="match status" value="1"/>
</dbReference>
<dbReference type="SUPFAM" id="SSF140864">
    <property type="entry name" value="TROVE domain-like"/>
    <property type="match status" value="1"/>
</dbReference>
<dbReference type="SUPFAM" id="SSF53300">
    <property type="entry name" value="vWA-like"/>
    <property type="match status" value="1"/>
</dbReference>
<dbReference type="PROSITE" id="PS50988">
    <property type="entry name" value="TROVE"/>
    <property type="match status" value="1"/>
</dbReference>
<keyword id="KW-0002">3D-structure</keyword>
<keyword id="KW-0970">Cilium biogenesis/degradation</keyword>
<keyword id="KW-0963">Cytoplasm</keyword>
<keyword id="KW-0479">Metal-binding</keyword>
<keyword id="KW-1185">Reference proteome</keyword>
<keyword id="KW-0687">Ribonucleoprotein</keyword>
<keyword id="KW-0694">RNA-binding</keyword>
<reference key="1">
    <citation type="journal article" date="1993" name="Proc. Natl. Acad. Sci. U.S.A.">
        <title>Xenopus Ro ribonucleoproteins: members of an evolutionarily conserved class of cytoplasmic ribonucleoproteins.</title>
        <authorList>
            <person name="O'Brien C.A."/>
            <person name="Margelot K."/>
            <person name="Wolin S.L."/>
        </authorList>
    </citation>
    <scope>NUCLEOTIDE SEQUENCE [MRNA]</scope>
    <source>
        <tissue>Embryo</tissue>
        <tissue>Ovary</tissue>
    </source>
</reference>
<reference key="2">
    <citation type="journal article" date="2005" name="Cell">
        <title>Structural insights into RNA quality control: the Ro autoantigen binds misfolded RNAs via its central cavity.</title>
        <authorList>
            <person name="Stein A.J."/>
            <person name="Fuchs G."/>
            <person name="Fu C."/>
            <person name="Wolin S.L."/>
            <person name="Reinisch K.M."/>
        </authorList>
    </citation>
    <scope>X-RAY CRYSTALLOGRAPHY (1.95 ANGSTROMS) ALONE AND IN COMPLEX WITH RNA AND MAGNESIUM IONS</scope>
    <scope>FUNCTION</scope>
    <scope>RNA-BINDING REGION</scope>
    <scope>METAL-BINDING SITES</scope>
    <scope>DOMAIN</scope>
</reference>
<reference key="3">
    <citation type="journal article" date="2006" name="Nat. Struct. Mol. Biol.">
        <title>Structural and biochemical basis for misfolded RNA recognition by the Ro autoantigen.</title>
        <authorList>
            <person name="Fuchs G."/>
            <person name="Stein A.J."/>
            <person name="Fu C."/>
            <person name="Reinisch K.M."/>
            <person name="Wolin S.L."/>
        </authorList>
    </citation>
    <scope>X-RAY CRYSTALLOGRAPHY (2.65 ANGSTROMS) IN COMPLEX WITH RNA AND MAGNNESIUM IONS</scope>
    <scope>FUNCTION</scope>
    <scope>DOMAIN</scope>
</reference>
<comment type="function">
    <text evidence="1 4 5">RNA-binding protein that binds to misfolded non-coding RNAs, pre-5S rRNA, and several small cytoplasmic RNA molecules known as Y RNAs (PubMed:15907467, PubMed:17041599). May play roles in cilia formation and/or maintenance (By similarity).</text>
</comment>
<comment type="subcellular location">
    <subcellularLocation>
        <location evidence="2">Cytoplasm</location>
    </subcellularLocation>
</comment>
<comment type="domain">
    <text>The horseshoe-shaped TROVE domain is built with 7 helical HEAT-like repeats, and is closed by the VWFA-like domain giving rise to a ring-shaped monomer. Single-stranded RNA is bound in the positively charged central cavity.</text>
</comment>
<comment type="domain">
    <text evidence="4 5">The MIDAS-like motif in the VWFA-like domain binds divalent metal cations.</text>
</comment>
<comment type="similarity">
    <text evidence="6">Belongs to the Ro 60 kDa family.</text>
</comment>